<evidence type="ECO:0000255" key="1">
    <source>
        <dbReference type="HAMAP-Rule" id="MF_01123"/>
    </source>
</evidence>
<proteinExistence type="inferred from homology"/>
<name>ACSA_XYLFA</name>
<accession>Q9PB89</accession>
<protein>
    <recommendedName>
        <fullName evidence="1">Acetyl-coenzyme A synthetase</fullName>
        <shortName evidence="1">AcCoA synthetase</shortName>
        <shortName evidence="1">Acs</shortName>
        <ecNumber evidence="1">6.2.1.1</ecNumber>
    </recommendedName>
    <alternativeName>
        <fullName evidence="1">Acetate--CoA ligase</fullName>
    </alternativeName>
    <alternativeName>
        <fullName evidence="1">Acyl-activating enzyme</fullName>
    </alternativeName>
</protein>
<dbReference type="EC" id="6.2.1.1" evidence="1"/>
<dbReference type="EMBL" id="AE003849">
    <property type="protein sequence ID" value="AAF85054.1"/>
    <property type="molecule type" value="Genomic_DNA"/>
</dbReference>
<dbReference type="PIR" id="E82579">
    <property type="entry name" value="E82579"/>
</dbReference>
<dbReference type="SMR" id="Q9PB89"/>
<dbReference type="STRING" id="160492.XF_2255"/>
<dbReference type="KEGG" id="xfa:XF_2255"/>
<dbReference type="eggNOG" id="COG0365">
    <property type="taxonomic scope" value="Bacteria"/>
</dbReference>
<dbReference type="HOGENOM" id="CLU_000022_3_6_6"/>
<dbReference type="Proteomes" id="UP000000812">
    <property type="component" value="Chromosome"/>
</dbReference>
<dbReference type="GO" id="GO:0005829">
    <property type="term" value="C:cytosol"/>
    <property type="evidence" value="ECO:0007669"/>
    <property type="project" value="TreeGrafter"/>
</dbReference>
<dbReference type="GO" id="GO:0003987">
    <property type="term" value="F:acetate-CoA ligase activity"/>
    <property type="evidence" value="ECO:0007669"/>
    <property type="project" value="UniProtKB-UniRule"/>
</dbReference>
<dbReference type="GO" id="GO:0016208">
    <property type="term" value="F:AMP binding"/>
    <property type="evidence" value="ECO:0007669"/>
    <property type="project" value="InterPro"/>
</dbReference>
<dbReference type="GO" id="GO:0005524">
    <property type="term" value="F:ATP binding"/>
    <property type="evidence" value="ECO:0007669"/>
    <property type="project" value="UniProtKB-KW"/>
</dbReference>
<dbReference type="GO" id="GO:0046872">
    <property type="term" value="F:metal ion binding"/>
    <property type="evidence" value="ECO:0007669"/>
    <property type="project" value="UniProtKB-KW"/>
</dbReference>
<dbReference type="GO" id="GO:0019427">
    <property type="term" value="P:acetyl-CoA biosynthetic process from acetate"/>
    <property type="evidence" value="ECO:0007669"/>
    <property type="project" value="InterPro"/>
</dbReference>
<dbReference type="CDD" id="cd05966">
    <property type="entry name" value="ACS"/>
    <property type="match status" value="1"/>
</dbReference>
<dbReference type="FunFam" id="3.30.300.30:FF:000004">
    <property type="entry name" value="Acetyl-coenzyme A synthetase"/>
    <property type="match status" value="1"/>
</dbReference>
<dbReference type="FunFam" id="3.40.50.12780:FF:000001">
    <property type="entry name" value="Acetyl-coenzyme A synthetase"/>
    <property type="match status" value="1"/>
</dbReference>
<dbReference type="Gene3D" id="3.30.300.30">
    <property type="match status" value="1"/>
</dbReference>
<dbReference type="Gene3D" id="3.40.50.12780">
    <property type="entry name" value="N-terminal domain of ligase-like"/>
    <property type="match status" value="1"/>
</dbReference>
<dbReference type="HAMAP" id="MF_01123">
    <property type="entry name" value="Ac_CoA_synth"/>
    <property type="match status" value="1"/>
</dbReference>
<dbReference type="InterPro" id="IPR011904">
    <property type="entry name" value="Ac_CoA_lig"/>
</dbReference>
<dbReference type="InterPro" id="IPR032387">
    <property type="entry name" value="ACAS_N"/>
</dbReference>
<dbReference type="InterPro" id="IPR025110">
    <property type="entry name" value="AMP-bd_C"/>
</dbReference>
<dbReference type="InterPro" id="IPR045851">
    <property type="entry name" value="AMP-bd_C_sf"/>
</dbReference>
<dbReference type="InterPro" id="IPR020845">
    <property type="entry name" value="AMP-binding_CS"/>
</dbReference>
<dbReference type="InterPro" id="IPR000873">
    <property type="entry name" value="AMP-dep_synth/lig_dom"/>
</dbReference>
<dbReference type="InterPro" id="IPR042099">
    <property type="entry name" value="ANL_N_sf"/>
</dbReference>
<dbReference type="NCBIfam" id="TIGR02188">
    <property type="entry name" value="Ac_CoA_lig_AcsA"/>
    <property type="match status" value="1"/>
</dbReference>
<dbReference type="NCBIfam" id="NF001208">
    <property type="entry name" value="PRK00174.1"/>
    <property type="match status" value="1"/>
</dbReference>
<dbReference type="PANTHER" id="PTHR24095">
    <property type="entry name" value="ACETYL-COENZYME A SYNTHETASE"/>
    <property type="match status" value="1"/>
</dbReference>
<dbReference type="PANTHER" id="PTHR24095:SF14">
    <property type="entry name" value="ACETYL-COENZYME A SYNTHETASE 1"/>
    <property type="match status" value="1"/>
</dbReference>
<dbReference type="Pfam" id="PF16177">
    <property type="entry name" value="ACAS_N"/>
    <property type="match status" value="1"/>
</dbReference>
<dbReference type="Pfam" id="PF00501">
    <property type="entry name" value="AMP-binding"/>
    <property type="match status" value="1"/>
</dbReference>
<dbReference type="Pfam" id="PF13193">
    <property type="entry name" value="AMP-binding_C"/>
    <property type="match status" value="1"/>
</dbReference>
<dbReference type="SUPFAM" id="SSF56801">
    <property type="entry name" value="Acetyl-CoA synthetase-like"/>
    <property type="match status" value="1"/>
</dbReference>
<dbReference type="PROSITE" id="PS00455">
    <property type="entry name" value="AMP_BINDING"/>
    <property type="match status" value="1"/>
</dbReference>
<gene>
    <name evidence="1" type="primary">acsA</name>
    <name type="ordered locus">XF_2255</name>
</gene>
<comment type="function">
    <text evidence="1">Catalyzes the conversion of acetate into acetyl-CoA (AcCoA), an essential intermediate at the junction of anabolic and catabolic pathways. AcsA undergoes a two-step reaction. In the first half reaction, AcsA combines acetate with ATP to form acetyl-adenylate (AcAMP) intermediate. In the second half reaction, it can then transfer the acetyl group from AcAMP to the sulfhydryl group of CoA, forming the product AcCoA.</text>
</comment>
<comment type="catalytic activity">
    <reaction evidence="1">
        <text>acetate + ATP + CoA = acetyl-CoA + AMP + diphosphate</text>
        <dbReference type="Rhea" id="RHEA:23176"/>
        <dbReference type="ChEBI" id="CHEBI:30089"/>
        <dbReference type="ChEBI" id="CHEBI:30616"/>
        <dbReference type="ChEBI" id="CHEBI:33019"/>
        <dbReference type="ChEBI" id="CHEBI:57287"/>
        <dbReference type="ChEBI" id="CHEBI:57288"/>
        <dbReference type="ChEBI" id="CHEBI:456215"/>
        <dbReference type="EC" id="6.2.1.1"/>
    </reaction>
</comment>
<comment type="cofactor">
    <cofactor evidence="1">
        <name>Mg(2+)</name>
        <dbReference type="ChEBI" id="CHEBI:18420"/>
    </cofactor>
</comment>
<comment type="PTM">
    <text evidence="1">Acetylated. Deacetylation by the SIR2-homolog deacetylase activates the enzyme.</text>
</comment>
<comment type="similarity">
    <text evidence="1">Belongs to the ATP-dependent AMP-binding enzyme family.</text>
</comment>
<reference key="1">
    <citation type="journal article" date="2000" name="Nature">
        <title>The genome sequence of the plant pathogen Xylella fastidiosa.</title>
        <authorList>
            <person name="Simpson A.J.G."/>
            <person name="Reinach F.C."/>
            <person name="Arruda P."/>
            <person name="Abreu F.A."/>
            <person name="Acencio M."/>
            <person name="Alvarenga R."/>
            <person name="Alves L.M.C."/>
            <person name="Araya J.E."/>
            <person name="Baia G.S."/>
            <person name="Baptista C.S."/>
            <person name="Barros M.H."/>
            <person name="Bonaccorsi E.D."/>
            <person name="Bordin S."/>
            <person name="Bove J.M."/>
            <person name="Briones M.R.S."/>
            <person name="Bueno M.R.P."/>
            <person name="Camargo A.A."/>
            <person name="Camargo L.E.A."/>
            <person name="Carraro D.M."/>
            <person name="Carrer H."/>
            <person name="Colauto N.B."/>
            <person name="Colombo C."/>
            <person name="Costa F.F."/>
            <person name="Costa M.C.R."/>
            <person name="Costa-Neto C.M."/>
            <person name="Coutinho L.L."/>
            <person name="Cristofani M."/>
            <person name="Dias-Neto E."/>
            <person name="Docena C."/>
            <person name="El-Dorry H."/>
            <person name="Facincani A.P."/>
            <person name="Ferreira A.J.S."/>
            <person name="Ferreira V.C.A."/>
            <person name="Ferro J.A."/>
            <person name="Fraga J.S."/>
            <person name="Franca S.C."/>
            <person name="Franco M.C."/>
            <person name="Frohme M."/>
            <person name="Furlan L.R."/>
            <person name="Garnier M."/>
            <person name="Goldman G.H."/>
            <person name="Goldman M.H.S."/>
            <person name="Gomes S.L."/>
            <person name="Gruber A."/>
            <person name="Ho P.L."/>
            <person name="Hoheisel J.D."/>
            <person name="Junqueira M.L."/>
            <person name="Kemper E.L."/>
            <person name="Kitajima J.P."/>
            <person name="Krieger J.E."/>
            <person name="Kuramae E.E."/>
            <person name="Laigret F."/>
            <person name="Lambais M.R."/>
            <person name="Leite L.C.C."/>
            <person name="Lemos E.G.M."/>
            <person name="Lemos M.V.F."/>
            <person name="Lopes S.A."/>
            <person name="Lopes C.R."/>
            <person name="Machado J.A."/>
            <person name="Machado M.A."/>
            <person name="Madeira A.M.B.N."/>
            <person name="Madeira H.M.F."/>
            <person name="Marino C.L."/>
            <person name="Marques M.V."/>
            <person name="Martins E.A.L."/>
            <person name="Martins E.M.F."/>
            <person name="Matsukuma A.Y."/>
            <person name="Menck C.F.M."/>
            <person name="Miracca E.C."/>
            <person name="Miyaki C.Y."/>
            <person name="Monteiro-Vitorello C.B."/>
            <person name="Moon D.H."/>
            <person name="Nagai M.A."/>
            <person name="Nascimento A.L.T.O."/>
            <person name="Netto L.E.S."/>
            <person name="Nhani A. Jr."/>
            <person name="Nobrega F.G."/>
            <person name="Nunes L.R."/>
            <person name="Oliveira M.A."/>
            <person name="de Oliveira M.C."/>
            <person name="de Oliveira R.C."/>
            <person name="Palmieri D.A."/>
            <person name="Paris A."/>
            <person name="Peixoto B.R."/>
            <person name="Pereira G.A.G."/>
            <person name="Pereira H.A. Jr."/>
            <person name="Pesquero J.B."/>
            <person name="Quaggio R.B."/>
            <person name="Roberto P.G."/>
            <person name="Rodrigues V."/>
            <person name="de Rosa A.J.M."/>
            <person name="de Rosa V.E. Jr."/>
            <person name="de Sa R.G."/>
            <person name="Santelli R.V."/>
            <person name="Sawasaki H.E."/>
            <person name="da Silva A.C.R."/>
            <person name="da Silva A.M."/>
            <person name="da Silva F.R."/>
            <person name="Silva W.A. Jr."/>
            <person name="da Silveira J.F."/>
            <person name="Silvestri M.L.Z."/>
            <person name="Siqueira W.J."/>
            <person name="de Souza A.A."/>
            <person name="de Souza A.P."/>
            <person name="Terenzi M.F."/>
            <person name="Truffi D."/>
            <person name="Tsai S.M."/>
            <person name="Tsuhako M.H."/>
            <person name="Vallada H."/>
            <person name="Van Sluys M.A."/>
            <person name="Verjovski-Almeida S."/>
            <person name="Vettore A.L."/>
            <person name="Zago M.A."/>
            <person name="Zatz M."/>
            <person name="Meidanis J."/>
            <person name="Setubal J.C."/>
        </authorList>
    </citation>
    <scope>NUCLEOTIDE SEQUENCE [LARGE SCALE GENOMIC DNA]</scope>
    <source>
        <strain>9a5c</strain>
    </source>
</reference>
<feature type="chain" id="PRO_0000208398" description="Acetyl-coenzyme A synthetase">
    <location>
        <begin position="1"/>
        <end position="647"/>
    </location>
</feature>
<feature type="binding site" evidence="1">
    <location>
        <begin position="190"/>
        <end position="193"/>
    </location>
    <ligand>
        <name>CoA</name>
        <dbReference type="ChEBI" id="CHEBI:57287"/>
    </ligand>
</feature>
<feature type="binding site" evidence="1">
    <location>
        <position position="310"/>
    </location>
    <ligand>
        <name>CoA</name>
        <dbReference type="ChEBI" id="CHEBI:57287"/>
    </ligand>
</feature>
<feature type="binding site" evidence="1">
    <location>
        <begin position="386"/>
        <end position="388"/>
    </location>
    <ligand>
        <name>ATP</name>
        <dbReference type="ChEBI" id="CHEBI:30616"/>
    </ligand>
</feature>
<feature type="binding site" evidence="1">
    <location>
        <begin position="410"/>
        <end position="415"/>
    </location>
    <ligand>
        <name>ATP</name>
        <dbReference type="ChEBI" id="CHEBI:30616"/>
    </ligand>
</feature>
<feature type="binding site" evidence="1">
    <location>
        <position position="499"/>
    </location>
    <ligand>
        <name>ATP</name>
        <dbReference type="ChEBI" id="CHEBI:30616"/>
    </ligand>
</feature>
<feature type="binding site" evidence="1">
    <location>
        <position position="514"/>
    </location>
    <ligand>
        <name>ATP</name>
        <dbReference type="ChEBI" id="CHEBI:30616"/>
    </ligand>
</feature>
<feature type="binding site" evidence="1">
    <location>
        <position position="522"/>
    </location>
    <ligand>
        <name>CoA</name>
        <dbReference type="ChEBI" id="CHEBI:57287"/>
    </ligand>
</feature>
<feature type="binding site" evidence="1">
    <location>
        <position position="525"/>
    </location>
    <ligand>
        <name>ATP</name>
        <dbReference type="ChEBI" id="CHEBI:30616"/>
    </ligand>
</feature>
<feature type="binding site" evidence="1">
    <location>
        <position position="536"/>
    </location>
    <ligand>
        <name>Mg(2+)</name>
        <dbReference type="ChEBI" id="CHEBI:18420"/>
    </ligand>
</feature>
<feature type="binding site" evidence="1">
    <location>
        <position position="538"/>
    </location>
    <ligand>
        <name>Mg(2+)</name>
        <dbReference type="ChEBI" id="CHEBI:18420"/>
    </ligand>
</feature>
<feature type="binding site" evidence="1">
    <location>
        <position position="541"/>
    </location>
    <ligand>
        <name>Mg(2+)</name>
        <dbReference type="ChEBI" id="CHEBI:18420"/>
    </ligand>
</feature>
<feature type="binding site" evidence="1">
    <location>
        <position position="583"/>
    </location>
    <ligand>
        <name>CoA</name>
        <dbReference type="ChEBI" id="CHEBI:57287"/>
    </ligand>
</feature>
<feature type="modified residue" description="N6-acetyllysine" evidence="1">
    <location>
        <position position="608"/>
    </location>
</feature>
<sequence length="647" mass="72218">MSDLYTIDPMLAKDAHVDRAHYKTLYHESLEQPEAFWSNIAQRLEWFKTPTKIKDVSYQLEDVHIRWFEDGELNASVNCLDRHLTLRGDKTALLFEPDAPDAPSSRITYRELYERVCQLGNALRHLNIEKGDRVTIYLPMIPDAVVAILACARIGAIHSVVFGGFAPNSIADRINDCGSKLIITADEGLRGGRKIPLKANVDAALKIHGTQSVETVLVVRHTGGTINMHTPRDRWFHHVVDIQATECAPERMNAEDPLFILYTSGSTGKPKGVLHTTGGYLVYTSYTHETVFDLRENDIYWCTADIGWITGHSYIVYGPLANGATVLLFEGVPHYPTVSRFWEVIDKHHVTLFYTAPTAIRALMREGDTPVKKTSRKSLRLLGSVGEPINPEAWHWYYTIVGNGRCPIVDTWWQTETGGILITPLIGATDLKPGSVTLPFFGIRPALVDTNGQILDGPAAGNLVLLDSWPGQMRTVYGDHQRFIDTYFRTYPNTYFTGDGCRRDADGYYWITGRVDDVINISGHRIGTAEIESTLVAHPKVAEAAVVGFPHPIKGQGIYAYVTLITGETPSEALHQELLTWVRKEIGAIATPDHVQWAPNLPKTRSGKIMRRILRKIAENAPDQLGDTSTLADPSIVDLLLNERLTH</sequence>
<keyword id="KW-0007">Acetylation</keyword>
<keyword id="KW-0067">ATP-binding</keyword>
<keyword id="KW-0436">Ligase</keyword>
<keyword id="KW-0460">Magnesium</keyword>
<keyword id="KW-0479">Metal-binding</keyword>
<keyword id="KW-0547">Nucleotide-binding</keyword>
<organism>
    <name type="scientific">Xylella fastidiosa (strain 9a5c)</name>
    <dbReference type="NCBI Taxonomy" id="160492"/>
    <lineage>
        <taxon>Bacteria</taxon>
        <taxon>Pseudomonadati</taxon>
        <taxon>Pseudomonadota</taxon>
        <taxon>Gammaproteobacteria</taxon>
        <taxon>Lysobacterales</taxon>
        <taxon>Lysobacteraceae</taxon>
        <taxon>Xylella</taxon>
    </lineage>
</organism>